<organism>
    <name type="scientific">Saccharomyces cerevisiae (strain Lalvin EC1118 / Prise de mousse)</name>
    <name type="common">Baker's yeast</name>
    <dbReference type="NCBI Taxonomy" id="643680"/>
    <lineage>
        <taxon>Eukaryota</taxon>
        <taxon>Fungi</taxon>
        <taxon>Dikarya</taxon>
        <taxon>Ascomycota</taxon>
        <taxon>Saccharomycotina</taxon>
        <taxon>Saccharomycetes</taxon>
        <taxon>Saccharomycetales</taxon>
        <taxon>Saccharomycetaceae</taxon>
        <taxon>Saccharomyces</taxon>
    </lineage>
</organism>
<dbReference type="EMBL" id="FN393071">
    <property type="protein sequence ID" value="CAY80164.1"/>
    <property type="molecule type" value="Genomic_DNA"/>
</dbReference>
<dbReference type="GlyCosmos" id="C8Z9U8">
    <property type="glycosylation" value="13 sites, No reported glycans"/>
</dbReference>
<dbReference type="HOGENOM" id="CLU_033723_0_0_1"/>
<dbReference type="OrthoDB" id="38991at4893"/>
<dbReference type="Proteomes" id="UP000000286">
    <property type="component" value="Chromosome VIII, Scaffold EC1118_1H13"/>
</dbReference>
<dbReference type="GO" id="GO:0016020">
    <property type="term" value="C:membrane"/>
    <property type="evidence" value="ECO:0007669"/>
    <property type="project" value="UniProtKB-SubCell"/>
</dbReference>
<dbReference type="InterPro" id="IPR051008">
    <property type="entry name" value="Telomere_Capping_Maintenance"/>
</dbReference>
<dbReference type="PANTHER" id="PTHR35518:SF2">
    <property type="entry name" value="MAINTENANCE OF TELOMERE CAPPING PROTEIN 6"/>
    <property type="match status" value="1"/>
</dbReference>
<dbReference type="PANTHER" id="PTHR35518">
    <property type="entry name" value="MAINTENANCE OF TELOMOERE CAPPING"/>
    <property type="match status" value="1"/>
</dbReference>
<dbReference type="Pfam" id="PF25506">
    <property type="entry name" value="TIM-barrel_MTC6"/>
    <property type="match status" value="1"/>
</dbReference>
<reference key="1">
    <citation type="journal article" date="2009" name="Proc. Natl. Acad. Sci. U.S.A.">
        <title>Eukaryote-to-eukaryote gene transfer events revealed by the genome sequence of the wine yeast Saccharomyces cerevisiae EC1118.</title>
        <authorList>
            <person name="Novo M."/>
            <person name="Bigey F."/>
            <person name="Beyne E."/>
            <person name="Galeote V."/>
            <person name="Gavory F."/>
            <person name="Mallet S."/>
            <person name="Cambon B."/>
            <person name="Legras J.-L."/>
            <person name="Wincker P."/>
            <person name="Casaregola S."/>
            <person name="Dequin S."/>
        </authorList>
    </citation>
    <scope>NUCLEOTIDE SEQUENCE [LARGE SCALE GENOMIC DNA]</scope>
    <source>
        <strain>Lalvin EC1118 / Prise de mousse</strain>
    </source>
</reference>
<name>MTC6_YEAS8</name>
<accession>C8Z9U8</accession>
<comment type="function">
    <text evidence="1">May be involved in telomere capping.</text>
</comment>
<comment type="subcellular location">
    <subcellularLocation>
        <location evidence="3">Membrane</location>
        <topology evidence="3">Single-pass type I membrane protein</topology>
    </subcellularLocation>
</comment>
<comment type="similarity">
    <text evidence="3">Belongs to the MTC6 family.</text>
</comment>
<proteinExistence type="inferred from homology"/>
<evidence type="ECO:0000250" key="1"/>
<evidence type="ECO:0000255" key="2"/>
<evidence type="ECO:0000305" key="3"/>
<keyword id="KW-0325">Glycoprotein</keyword>
<keyword id="KW-0472">Membrane</keyword>
<keyword id="KW-0732">Signal</keyword>
<keyword id="KW-0812">Transmembrane</keyword>
<keyword id="KW-1133">Transmembrane helix</keyword>
<gene>
    <name type="primary">MTC6</name>
    <name type="ORF">EC1118_1H13_1255g</name>
</gene>
<protein>
    <recommendedName>
        <fullName>Maintenance of telomere capping protein 6</fullName>
    </recommendedName>
</protein>
<feature type="signal peptide" evidence="2">
    <location>
        <begin position="1"/>
        <end position="20"/>
    </location>
</feature>
<feature type="chain" id="PRO_0000407789" description="Maintenance of telomere capping protein 6">
    <location>
        <begin position="21"/>
        <end position="526"/>
    </location>
</feature>
<feature type="topological domain" description="Extracellular" evidence="2">
    <location>
        <begin position="21"/>
        <end position="477"/>
    </location>
</feature>
<feature type="transmembrane region" description="Helical" evidence="2">
    <location>
        <begin position="478"/>
        <end position="498"/>
    </location>
</feature>
<feature type="topological domain" description="Cytoplasmic" evidence="2">
    <location>
        <begin position="499"/>
        <end position="526"/>
    </location>
</feature>
<feature type="glycosylation site" description="N-linked (GlcNAc...) asparagine" evidence="2">
    <location>
        <position position="32"/>
    </location>
</feature>
<feature type="glycosylation site" description="N-linked (GlcNAc...) asparagine" evidence="2">
    <location>
        <position position="60"/>
    </location>
</feature>
<feature type="glycosylation site" description="N-linked (GlcNAc...) asparagine" evidence="2">
    <location>
        <position position="80"/>
    </location>
</feature>
<feature type="glycosylation site" description="N-linked (GlcNAc...) asparagine" evidence="2">
    <location>
        <position position="89"/>
    </location>
</feature>
<feature type="glycosylation site" description="N-linked (GlcNAc...) asparagine" evidence="2">
    <location>
        <position position="156"/>
    </location>
</feature>
<feature type="glycosylation site" description="N-linked (GlcNAc...) asparagine" evidence="2">
    <location>
        <position position="171"/>
    </location>
</feature>
<feature type="glycosylation site" description="N-linked (GlcNAc...) asparagine" evidence="2">
    <location>
        <position position="175"/>
    </location>
</feature>
<feature type="glycosylation site" description="N-linked (GlcNAc...) asparagine" evidence="2">
    <location>
        <position position="202"/>
    </location>
</feature>
<feature type="glycosylation site" description="N-linked (GlcNAc...) asparagine" evidence="2">
    <location>
        <position position="240"/>
    </location>
</feature>
<feature type="glycosylation site" description="N-linked (GlcNAc...) asparagine" evidence="2">
    <location>
        <position position="259"/>
    </location>
</feature>
<feature type="glycosylation site" description="N-linked (GlcNAc...) asparagine" evidence="2">
    <location>
        <position position="311"/>
    </location>
</feature>
<feature type="glycosylation site" description="N-linked (GlcNAc...) asparagine" evidence="2">
    <location>
        <position position="362"/>
    </location>
</feature>
<feature type="glycosylation site" description="N-linked (GlcNAc...) asparagine" evidence="2">
    <location>
        <position position="433"/>
    </location>
</feature>
<sequence length="526" mass="59832">MWILIYLFIIWSSLRTWVTAVDSTTTVGDDLNETVSASVWPTMSPQMTVAFRSQRDVMGNLTIDQLPYVGLNLRRVLLNNETSMVNEGNNTRLLTLFKSMLSSEANAFVLDLEQYNNDLRVVDTTLLFSDVLIALESFIFSTQNNLYANIIVLLLNISAPELDSTEYRHQNQTLNTTYILDKNLGNSFIYKPTDLQSDRAKNNTWNIYGKSSIDGWPTLGSVLYEQKKRLVIGELTDFFNETTAPYIFPHDVFHYEQGNSTLDCPSTVEGLTDLSSIHWRFLDSLFNSVDIKEYISCGLSPIISNSAYVNNVTQLADIIHEGSVWSWDSDQPSVTQSTSKSGSSSGTLEAYNCVLLYYFANNETVTWRVGNCYNSNIGLCRYENMAFRWLVRSNKATYFDFDSYQGSKCPDQYSFNIPRSPLEQRSFIAYMRNSSFSDTQIWIDLNSISVSNCWVSGGPYASCPYEKVISRRNFVTMMVPASVCSFALLCIVVYLSVLRVPIYDNRKNWRRVINKISKSELEGVPS</sequence>